<feature type="chain" id="PRO_0000150970" description="Terminal uridylyltransferase 4">
    <location>
        <begin position="1"/>
        <end position="1644"/>
    </location>
</feature>
<feature type="domain" description="PAP-associated 1">
    <location>
        <begin position="628"/>
        <end position="678"/>
    </location>
</feature>
<feature type="domain" description="PAP-associated 2">
    <location>
        <begin position="1184"/>
        <end position="1237"/>
    </location>
</feature>
<feature type="zinc finger region" description="CCHC-type 1" evidence="4">
    <location>
        <begin position="913"/>
        <end position="930"/>
    </location>
</feature>
<feature type="zinc finger region" description="CCHC-type 2" evidence="4">
    <location>
        <begin position="1293"/>
        <end position="1310"/>
    </location>
</feature>
<feature type="zinc finger region" description="CCHC-type 3" evidence="4">
    <location>
        <begin position="1357"/>
        <end position="1374"/>
    </location>
</feature>
<feature type="region of interest" description="Disordered" evidence="5">
    <location>
        <begin position="31"/>
        <end position="63"/>
    </location>
</feature>
<feature type="region of interest" description="Disordered" evidence="5">
    <location>
        <begin position="96"/>
        <end position="168"/>
    </location>
</feature>
<feature type="region of interest" description="Disordered" evidence="5">
    <location>
        <begin position="205"/>
        <end position="257"/>
    </location>
</feature>
<feature type="region of interest" description="Required for interaction with LIN28A and pre-let-7 RNA" evidence="13">
    <location>
        <begin position="253"/>
        <end position="333"/>
    </location>
</feature>
<feature type="region of interest" description="Disordered" evidence="5">
    <location>
        <begin position="579"/>
        <end position="617"/>
    </location>
</feature>
<feature type="region of interest" description="Disordered" evidence="5">
    <location>
        <begin position="794"/>
        <end position="816"/>
    </location>
</feature>
<feature type="region of interest" description="Sufficient for monouridylation activity" evidence="3">
    <location>
        <begin position="901"/>
        <end position="1634"/>
    </location>
</feature>
<feature type="region of interest" description="Disordered" evidence="5">
    <location>
        <begin position="1321"/>
        <end position="1348"/>
    </location>
</feature>
<feature type="region of interest" description="Disordered" evidence="5">
    <location>
        <begin position="1401"/>
        <end position="1482"/>
    </location>
</feature>
<feature type="compositionally biased region" description="Basic and acidic residues" evidence="5">
    <location>
        <begin position="36"/>
        <end position="46"/>
    </location>
</feature>
<feature type="compositionally biased region" description="Polar residues" evidence="5">
    <location>
        <begin position="112"/>
        <end position="125"/>
    </location>
</feature>
<feature type="compositionally biased region" description="Polar residues" evidence="5">
    <location>
        <begin position="206"/>
        <end position="222"/>
    </location>
</feature>
<feature type="compositionally biased region" description="Basic and acidic residues" evidence="5">
    <location>
        <begin position="238"/>
        <end position="252"/>
    </location>
</feature>
<feature type="compositionally biased region" description="Basic and acidic residues" evidence="5">
    <location>
        <begin position="582"/>
        <end position="603"/>
    </location>
</feature>
<feature type="compositionally biased region" description="Basic and acidic residues" evidence="5">
    <location>
        <begin position="806"/>
        <end position="816"/>
    </location>
</feature>
<feature type="compositionally biased region" description="Basic and acidic residues" evidence="5">
    <location>
        <begin position="1334"/>
        <end position="1348"/>
    </location>
</feature>
<feature type="compositionally biased region" description="Low complexity" evidence="5">
    <location>
        <begin position="1401"/>
        <end position="1426"/>
    </location>
</feature>
<feature type="compositionally biased region" description="Polar residues" evidence="5">
    <location>
        <begin position="1441"/>
        <end position="1452"/>
    </location>
</feature>
<feature type="compositionally biased region" description="Low complexity" evidence="5">
    <location>
        <begin position="1453"/>
        <end position="1470"/>
    </location>
</feature>
<feature type="binding site" evidence="13">
    <location>
        <position position="306"/>
    </location>
    <ligand>
        <name>Zn(2+)</name>
        <dbReference type="ChEBI" id="CHEBI:29105"/>
        <label>1</label>
    </ligand>
</feature>
<feature type="binding site" evidence="13">
    <location>
        <position position="309"/>
    </location>
    <ligand>
        <name>Zn(2+)</name>
        <dbReference type="ChEBI" id="CHEBI:29105"/>
        <label>1</label>
    </ligand>
</feature>
<feature type="binding site" evidence="13">
    <location>
        <position position="322"/>
    </location>
    <ligand>
        <name>Zn(2+)</name>
        <dbReference type="ChEBI" id="CHEBI:29105"/>
        <label>1</label>
    </ligand>
</feature>
<feature type="binding site" evidence="13">
    <location>
        <position position="328"/>
    </location>
    <ligand>
        <name>Zn(2+)</name>
        <dbReference type="ChEBI" id="CHEBI:29105"/>
        <label>1</label>
    </ligand>
</feature>
<feature type="binding site" evidence="3">
    <location>
        <begin position="998"/>
        <end position="1001"/>
    </location>
    <ligand>
        <name>UTP</name>
        <dbReference type="ChEBI" id="CHEBI:46398"/>
    </ligand>
</feature>
<feature type="binding site" evidence="3">
    <location>
        <begin position="1008"/>
        <end position="1011"/>
    </location>
    <ligand>
        <name>UTP</name>
        <dbReference type="ChEBI" id="CHEBI:46398"/>
    </ligand>
</feature>
<feature type="binding site" evidence="1">
    <location>
        <position position="1009"/>
    </location>
    <ligand>
        <name>Mg(2+)</name>
        <dbReference type="ChEBI" id="CHEBI:18420"/>
        <note>catalytic</note>
    </ligand>
</feature>
<feature type="binding site" evidence="1">
    <location>
        <position position="1011"/>
    </location>
    <ligand>
        <name>Mg(2+)</name>
        <dbReference type="ChEBI" id="CHEBI:18420"/>
        <note>catalytic</note>
    </ligand>
</feature>
<feature type="binding site" evidence="3">
    <location>
        <position position="1081"/>
    </location>
    <ligand>
        <name>UTP</name>
        <dbReference type="ChEBI" id="CHEBI:46398"/>
    </ligand>
</feature>
<feature type="binding site" evidence="3">
    <location>
        <position position="1103"/>
    </location>
    <ligand>
        <name>UTP</name>
        <dbReference type="ChEBI" id="CHEBI:46398"/>
    </ligand>
</feature>
<feature type="binding site" evidence="3">
    <location>
        <begin position="1121"/>
        <end position="1125"/>
    </location>
    <ligand>
        <name>UTP</name>
        <dbReference type="ChEBI" id="CHEBI:46398"/>
    </ligand>
</feature>
<feature type="binding site" evidence="3">
    <location>
        <position position="1237"/>
    </location>
    <ligand>
        <name>UTP</name>
        <dbReference type="ChEBI" id="CHEBI:46398"/>
    </ligand>
</feature>
<feature type="modified residue" description="Phosphoserine" evidence="16">
    <location>
        <position position="104"/>
    </location>
</feature>
<feature type="modified residue" description="Phosphoserine" evidence="2">
    <location>
        <position position="134"/>
    </location>
</feature>
<feature type="modified residue" description="Phosphoserine" evidence="16">
    <location>
        <position position="156"/>
    </location>
</feature>
<feature type="modified residue" description="Omega-N-methylarginine" evidence="2">
    <location>
        <position position="1624"/>
    </location>
</feature>
<feature type="splice variant" id="VSP_062487" description="In isoform 3.">
    <original>S</original>
    <variation>SS</variation>
    <location>
        <position position="1313"/>
    </location>
</feature>
<feature type="sequence variant" id="VAR_028402" description="In dbSNP:rs12127732.">
    <original>D</original>
    <variation>Y</variation>
    <location>
        <position position="796"/>
    </location>
</feature>
<feature type="mutagenesis site" description="Loss of interaction with LIN28A and pre-let-7 RNA." evidence="13">
    <location>
        <begin position="253"/>
        <end position="333"/>
    </location>
</feature>
<feature type="mutagenesis site" description="Loss of LIN28A and pre-let-7 RNA binding and loss of pre-let-7 RNA uridylylation; when associated with A-309." evidence="13">
    <original>C</original>
    <variation>A</variation>
    <location>
        <position position="306"/>
    </location>
</feature>
<feature type="mutagenesis site" description="Loss of LIN28A and pre-let-7 RNA binding and loss of pre-let-7 RNA uridylylation; when associated with A-306." evidence="13">
    <original>C</original>
    <variation>A</variation>
    <location>
        <position position="309"/>
    </location>
</feature>
<feature type="mutagenesis site" description="Strongly decreased LIN28A and pre-let-7 RNA binding and pre-let-7 RNA uridylylation; when associated with A-324." evidence="13">
    <original>K</original>
    <variation>A</variation>
    <location>
        <position position="321"/>
    </location>
</feature>
<feature type="mutagenesis site" description="Strongly decreased LIN28A and pre-let-7 RNA binding and pre-let-7 RNA uridylylation; when associated with A-321." evidence="13">
    <original>K</original>
    <variation>A</variation>
    <location>
        <position position="324"/>
    </location>
</feature>
<feature type="mutagenesis site" description="Strongly decreased LIN28A and pre-let-7 RNA binding and pre-let-7 RNA uridylylation." evidence="13">
    <original>KR</original>
    <variation>AA</variation>
    <location>
        <begin position="326"/>
        <end position="327"/>
    </location>
</feature>
<feature type="mutagenesis site" description="Decreased LIN28A and pre-let-7 RNA binding and pre-let-7 RNA uridylylation." evidence="13">
    <original>KK</original>
    <variation>AA</variation>
    <location>
        <begin position="329"/>
        <end position="330"/>
    </location>
</feature>
<feature type="mutagenesis site" description="Decreased LIN28A and pre-let-7 RNA binding and pre-let-7 RNA uridylylation; when associated with A-452." evidence="13">
    <original>H</original>
    <variation>A</variation>
    <location>
        <position position="450"/>
    </location>
</feature>
<feature type="mutagenesis site" description="Decreased LIN28A and pre-let-7 RNA binding and pre-let-7 RNA uridylylation; when associated with A-450." evidence="13">
    <original>K</original>
    <variation>A</variation>
    <location>
        <position position="452"/>
    </location>
</feature>
<feature type="mutagenesis site" description="Decreased LIN28A and pre-let-7 RNA binding and pre-let-7 RNA uridylylation." evidence="13">
    <original>RR</original>
    <variation>AA</variation>
    <location>
        <begin position="669"/>
        <end position="670"/>
    </location>
</feature>
<feature type="mutagenesis site" description="Loss of nucleotidyltransferase activity and stabilization of pre-let-7 miRNAs. Abolishes inhibition of LIRE1 retrotransposition." evidence="8 10 12">
    <original>D</original>
    <variation>A</variation>
    <location>
        <position position="1011"/>
    </location>
</feature>
<feature type="helix" evidence="17">
    <location>
        <begin position="255"/>
        <end position="260"/>
    </location>
</feature>
<feature type="turn" evidence="17">
    <location>
        <begin position="266"/>
        <end position="268"/>
    </location>
</feature>
<feature type="helix" evidence="17">
    <location>
        <begin position="271"/>
        <end position="285"/>
    </location>
</feature>
<feature type="turn" evidence="17">
    <location>
        <begin position="286"/>
        <end position="288"/>
    </location>
</feature>
<feature type="strand" evidence="17">
    <location>
        <begin position="289"/>
        <end position="291"/>
    </location>
</feature>
<feature type="strand" evidence="17">
    <location>
        <begin position="304"/>
        <end position="306"/>
    </location>
</feature>
<feature type="turn" evidence="17">
    <location>
        <begin position="307"/>
        <end position="310"/>
    </location>
</feature>
<feature type="strand" evidence="17">
    <location>
        <begin position="311"/>
        <end position="313"/>
    </location>
</feature>
<feature type="helix" evidence="17">
    <location>
        <begin position="316"/>
        <end position="323"/>
    </location>
</feature>
<feature type="helix" evidence="17">
    <location>
        <begin position="326"/>
        <end position="342"/>
    </location>
</feature>
<feature type="helix" evidence="17">
    <location>
        <begin position="349"/>
        <end position="366"/>
    </location>
</feature>
<feature type="helix" evidence="17">
    <location>
        <begin position="370"/>
        <end position="388"/>
    </location>
</feature>
<feature type="strand" evidence="17">
    <location>
        <begin position="395"/>
        <end position="399"/>
    </location>
</feature>
<feature type="helix" evidence="17">
    <location>
        <begin position="401"/>
        <end position="404"/>
    </location>
</feature>
<feature type="strand" evidence="17">
    <location>
        <begin position="413"/>
        <end position="418"/>
    </location>
</feature>
<feature type="strand" evidence="17">
    <location>
        <begin position="421"/>
        <end position="423"/>
    </location>
</feature>
<feature type="helix" evidence="17">
    <location>
        <begin position="425"/>
        <end position="438"/>
    </location>
</feature>
<feature type="strand" evidence="17">
    <location>
        <begin position="442"/>
        <end position="448"/>
    </location>
</feature>
<feature type="strand" evidence="17">
    <location>
        <begin position="450"/>
        <end position="453"/>
    </location>
</feature>
<feature type="strand" evidence="17">
    <location>
        <begin position="455"/>
        <end position="460"/>
    </location>
</feature>
<feature type="turn" evidence="17">
    <location>
        <begin position="461"/>
        <end position="463"/>
    </location>
</feature>
<feature type="strand" evidence="17">
    <location>
        <begin position="466"/>
        <end position="472"/>
    </location>
</feature>
<feature type="helix" evidence="17">
    <location>
        <begin position="474"/>
        <end position="489"/>
    </location>
</feature>
<feature type="helix" evidence="17">
    <location>
        <begin position="493"/>
        <end position="502"/>
    </location>
</feature>
<feature type="turn" evidence="17">
    <location>
        <begin position="503"/>
        <end position="505"/>
    </location>
</feature>
<feature type="helix" evidence="17">
    <location>
        <begin position="506"/>
        <end position="509"/>
    </location>
</feature>
<feature type="helix" evidence="17">
    <location>
        <begin position="517"/>
        <end position="532"/>
    </location>
</feature>
<feature type="strand" evidence="17">
    <location>
        <begin position="533"/>
        <end position="535"/>
    </location>
</feature>
<feature type="strand" evidence="17">
    <location>
        <begin position="541"/>
        <end position="543"/>
    </location>
</feature>
<feature type="helix" evidence="17">
    <location>
        <begin position="554"/>
        <end position="556"/>
    </location>
</feature>
<feature type="strand" evidence="17">
    <location>
        <begin position="558"/>
        <end position="563"/>
    </location>
</feature>
<feature type="turn" evidence="17">
    <location>
        <begin position="564"/>
        <end position="566"/>
    </location>
</feature>
<feature type="strand" evidence="17">
    <location>
        <begin position="567"/>
        <end position="571"/>
    </location>
</feature>
<feature type="strand" evidence="17">
    <location>
        <begin position="613"/>
        <end position="619"/>
    </location>
</feature>
<feature type="helix" evidence="17">
    <location>
        <begin position="629"/>
        <end position="641"/>
    </location>
</feature>
<feature type="turn" evidence="17">
    <location>
        <begin position="646"/>
        <end position="648"/>
    </location>
</feature>
<feature type="strand" evidence="17">
    <location>
        <begin position="649"/>
        <end position="651"/>
    </location>
</feature>
<feature type="turn" evidence="17">
    <location>
        <begin position="661"/>
        <end position="665"/>
    </location>
</feature>
<feature type="strand" evidence="17">
    <location>
        <begin position="673"/>
        <end position="675"/>
    </location>
</feature>
<feature type="strand" evidence="17">
    <location>
        <begin position="678"/>
        <end position="682"/>
    </location>
</feature>
<feature type="helix" evidence="17">
    <location>
        <begin position="683"/>
        <end position="687"/>
    </location>
</feature>
<feature type="helix" evidence="17">
    <location>
        <begin position="690"/>
        <end position="707"/>
    </location>
</feature>
<organism>
    <name type="scientific">Homo sapiens</name>
    <name type="common">Human</name>
    <dbReference type="NCBI Taxonomy" id="9606"/>
    <lineage>
        <taxon>Eukaryota</taxon>
        <taxon>Metazoa</taxon>
        <taxon>Chordata</taxon>
        <taxon>Craniata</taxon>
        <taxon>Vertebrata</taxon>
        <taxon>Euteleostomi</taxon>
        <taxon>Mammalia</taxon>
        <taxon>Eutheria</taxon>
        <taxon>Euarchontoglires</taxon>
        <taxon>Primates</taxon>
        <taxon>Haplorrhini</taxon>
        <taxon>Catarrhini</taxon>
        <taxon>Hominidae</taxon>
        <taxon>Homo</taxon>
    </lineage>
</organism>
<name>TUT4_HUMAN</name>
<dbReference type="EC" id="2.7.7.52" evidence="8 13"/>
<dbReference type="EMBL" id="AL591167">
    <property type="status" value="NOT_ANNOTATED_CDS"/>
    <property type="molecule type" value="Genomic_DNA"/>
</dbReference>
<dbReference type="EMBL" id="AL513218">
    <property type="status" value="NOT_ANNOTATED_CDS"/>
    <property type="molecule type" value="Genomic_DNA"/>
</dbReference>
<dbReference type="EMBL" id="KF495951">
    <property type="status" value="NOT_ANNOTATED_CDS"/>
    <property type="molecule type" value="Genomic_DNA"/>
</dbReference>
<dbReference type="EMBL" id="AL138849">
    <property type="status" value="NOT_ANNOTATED_CDS"/>
    <property type="molecule type" value="Genomic_DNA"/>
</dbReference>
<dbReference type="EMBL" id="CH471059">
    <property type="protein sequence ID" value="EAX06778.1"/>
    <property type="molecule type" value="Genomic_DNA"/>
</dbReference>
<dbReference type="EMBL" id="CH471059">
    <property type="protein sequence ID" value="EAX06780.1"/>
    <property type="molecule type" value="Genomic_DNA"/>
</dbReference>
<dbReference type="EMBL" id="BC131734">
    <property type="protein sequence ID" value="AAI31735.1"/>
    <property type="molecule type" value="mRNA"/>
</dbReference>
<dbReference type="EMBL" id="AK303532">
    <property type="protein sequence ID" value="BAH13981.1"/>
    <property type="status" value="ALT_SEQ"/>
    <property type="molecule type" value="mRNA"/>
</dbReference>
<dbReference type="EMBL" id="D83776">
    <property type="protein sequence ID" value="BAA12105.1"/>
    <property type="molecule type" value="mRNA"/>
</dbReference>
<dbReference type="CCDS" id="CCDS30715.1">
    <molecule id="Q5TAX3-3"/>
</dbReference>
<dbReference type="CCDS" id="CCDS30716.1">
    <molecule id="Q5TAX3-1"/>
</dbReference>
<dbReference type="RefSeq" id="NP_001009881.1">
    <molecule id="Q5TAX3-3"/>
    <property type="nucleotide sequence ID" value="NM_001009881.3"/>
</dbReference>
<dbReference type="RefSeq" id="NP_056084.1">
    <molecule id="Q5TAX3-1"/>
    <property type="nucleotide sequence ID" value="NM_015269.2"/>
</dbReference>
<dbReference type="RefSeq" id="XP_047272281.1">
    <molecule id="Q5TAX3-3"/>
    <property type="nucleotide sequence ID" value="XM_047416325.1"/>
</dbReference>
<dbReference type="RefSeq" id="XP_047272282.1">
    <molecule id="Q5TAX3-1"/>
    <property type="nucleotide sequence ID" value="XM_047416326.1"/>
</dbReference>
<dbReference type="PDB" id="6IW6">
    <property type="method" value="X-ray"/>
    <property type="resolution" value="2.40 A"/>
    <property type="chains" value="A/B=253-723"/>
</dbReference>
<dbReference type="PDB" id="8OST">
    <property type="method" value="EM"/>
    <property type="resolution" value="3.69 A"/>
    <property type="chains" value="A=1-1644"/>
</dbReference>
<dbReference type="PDBsum" id="6IW6"/>
<dbReference type="PDBsum" id="8OST"/>
<dbReference type="EMDB" id="EMD-17164"/>
<dbReference type="SMR" id="Q5TAX3"/>
<dbReference type="BioGRID" id="116909">
    <property type="interactions" value="89"/>
</dbReference>
<dbReference type="FunCoup" id="Q5TAX3">
    <property type="interactions" value="2007"/>
</dbReference>
<dbReference type="IntAct" id="Q5TAX3">
    <property type="interactions" value="28"/>
</dbReference>
<dbReference type="MINT" id="Q5TAX3"/>
<dbReference type="STRING" id="9606.ENSP00000257177"/>
<dbReference type="GlyGen" id="Q5TAX3">
    <property type="glycosylation" value="2 sites, 1 N-linked glycan (1 site), 1 O-linked glycan (1 site)"/>
</dbReference>
<dbReference type="iPTMnet" id="Q5TAX3"/>
<dbReference type="PhosphoSitePlus" id="Q5TAX3"/>
<dbReference type="BioMuta" id="ZCCHC11"/>
<dbReference type="DMDM" id="116242850"/>
<dbReference type="jPOST" id="Q5TAX3"/>
<dbReference type="MassIVE" id="Q5TAX3"/>
<dbReference type="PaxDb" id="9606-ENSP00000257177"/>
<dbReference type="PeptideAtlas" id="Q5TAX3"/>
<dbReference type="ProteomicsDB" id="64876">
    <molecule id="Q5TAX3-1"/>
</dbReference>
<dbReference type="Pumba" id="Q5TAX3"/>
<dbReference type="Antibodypedia" id="19117">
    <property type="antibodies" value="205 antibodies from 31 providers"/>
</dbReference>
<dbReference type="DNASU" id="23318"/>
<dbReference type="Ensembl" id="ENST00000257177.9">
    <molecule id="Q5TAX3-3"/>
    <property type="protein sequence ID" value="ENSP00000257177.4"/>
    <property type="gene ID" value="ENSG00000134744.14"/>
</dbReference>
<dbReference type="Ensembl" id="ENST00000371544.7">
    <molecule id="Q5TAX3-1"/>
    <property type="protein sequence ID" value="ENSP00000360599.3"/>
    <property type="gene ID" value="ENSG00000134744.14"/>
</dbReference>
<dbReference type="GeneID" id="23318"/>
<dbReference type="KEGG" id="hsa:23318"/>
<dbReference type="MANE-Select" id="ENST00000257177.9">
    <molecule id="Q5TAX3-3"/>
    <property type="protein sequence ID" value="ENSP00000257177.4"/>
    <property type="RefSeq nucleotide sequence ID" value="NM_001009881.3"/>
    <property type="RefSeq protein sequence ID" value="NP_001009881.1"/>
</dbReference>
<dbReference type="UCSC" id="uc001ctx.3">
    <molecule id="Q5TAX3-1"/>
    <property type="organism name" value="human"/>
</dbReference>
<dbReference type="AGR" id="HGNC:28981"/>
<dbReference type="CTD" id="23318"/>
<dbReference type="DisGeNET" id="23318"/>
<dbReference type="GeneCards" id="TUT4"/>
<dbReference type="HGNC" id="HGNC:28981">
    <property type="gene designation" value="TUT4"/>
</dbReference>
<dbReference type="HPA" id="ENSG00000134744">
    <property type="expression patterns" value="Low tissue specificity"/>
</dbReference>
<dbReference type="MIM" id="613692">
    <property type="type" value="gene"/>
</dbReference>
<dbReference type="neXtProt" id="NX_Q5TAX3"/>
<dbReference type="OpenTargets" id="ENSG00000134744"/>
<dbReference type="PharmGKB" id="PA134918178"/>
<dbReference type="VEuPathDB" id="HostDB:ENSG00000134744"/>
<dbReference type="eggNOG" id="KOG2277">
    <property type="taxonomic scope" value="Eukaryota"/>
</dbReference>
<dbReference type="GeneTree" id="ENSGT00940000156988"/>
<dbReference type="InParanoid" id="Q5TAX3"/>
<dbReference type="OMA" id="HCKAKKL"/>
<dbReference type="OrthoDB" id="419694at2759"/>
<dbReference type="PAN-GO" id="Q5TAX3">
    <property type="GO annotations" value="2 GO annotations based on evolutionary models"/>
</dbReference>
<dbReference type="PhylomeDB" id="Q5TAX3"/>
<dbReference type="TreeFam" id="TF315661"/>
<dbReference type="BRENDA" id="2.7.7.52">
    <property type="organism ID" value="2681"/>
</dbReference>
<dbReference type="PathwayCommons" id="Q5TAX3"/>
<dbReference type="Reactome" id="R-HSA-429947">
    <property type="pathway name" value="Deadenylation of mRNA"/>
</dbReference>
<dbReference type="Reactome" id="R-HSA-9819196">
    <property type="pathway name" value="Zygotic genome activation (ZGA)"/>
</dbReference>
<dbReference type="Reactome" id="R-HSA-9820865">
    <property type="pathway name" value="Z-decay: degradation of maternal mRNAs by zygotically expressed factors"/>
</dbReference>
<dbReference type="SignaLink" id="Q5TAX3"/>
<dbReference type="SIGNOR" id="Q5TAX3"/>
<dbReference type="BioGRID-ORCS" id="23318">
    <property type="hits" value="17 hits in 1161 CRISPR screens"/>
</dbReference>
<dbReference type="CD-CODE" id="232F8A39">
    <property type="entry name" value="P-body"/>
</dbReference>
<dbReference type="CD-CODE" id="DEE660B4">
    <property type="entry name" value="Stress granule"/>
</dbReference>
<dbReference type="ChiTaRS" id="ZCCHC11">
    <property type="organism name" value="human"/>
</dbReference>
<dbReference type="GenomeRNAi" id="23318"/>
<dbReference type="Pharos" id="Q5TAX3">
    <property type="development level" value="Tbio"/>
</dbReference>
<dbReference type="PRO" id="PR:Q5TAX3"/>
<dbReference type="Proteomes" id="UP000005640">
    <property type="component" value="Chromosome 1"/>
</dbReference>
<dbReference type="RNAct" id="Q5TAX3">
    <property type="molecule type" value="protein"/>
</dbReference>
<dbReference type="Bgee" id="ENSG00000134744">
    <property type="expression patterns" value="Expressed in right hemisphere of cerebellum and 191 other cell types or tissues"/>
</dbReference>
<dbReference type="ExpressionAtlas" id="Q5TAX3">
    <property type="expression patterns" value="baseline and differential"/>
</dbReference>
<dbReference type="GO" id="GO:0005737">
    <property type="term" value="C:cytoplasm"/>
    <property type="evidence" value="ECO:0000314"/>
    <property type="project" value="UniProtKB"/>
</dbReference>
<dbReference type="GO" id="GO:0036464">
    <property type="term" value="C:cytoplasmic ribonucleoprotein granule"/>
    <property type="evidence" value="ECO:0000314"/>
    <property type="project" value="UniProtKB"/>
</dbReference>
<dbReference type="GO" id="GO:0005829">
    <property type="term" value="C:cytosol"/>
    <property type="evidence" value="ECO:0000314"/>
    <property type="project" value="HPA"/>
</dbReference>
<dbReference type="GO" id="GO:0070062">
    <property type="term" value="C:extracellular exosome"/>
    <property type="evidence" value="ECO:0007005"/>
    <property type="project" value="UniProtKB"/>
</dbReference>
<dbReference type="GO" id="GO:0005615">
    <property type="term" value="C:extracellular space"/>
    <property type="evidence" value="ECO:0007005"/>
    <property type="project" value="UniProtKB"/>
</dbReference>
<dbReference type="GO" id="GO:0005730">
    <property type="term" value="C:nucleolus"/>
    <property type="evidence" value="ECO:0000314"/>
    <property type="project" value="HPA"/>
</dbReference>
<dbReference type="GO" id="GO:0035198">
    <property type="term" value="F:miRNA binding"/>
    <property type="evidence" value="ECO:0000250"/>
    <property type="project" value="UniProtKB"/>
</dbReference>
<dbReference type="GO" id="GO:0003723">
    <property type="term" value="F:RNA binding"/>
    <property type="evidence" value="ECO:0007005"/>
    <property type="project" value="UniProtKB"/>
</dbReference>
<dbReference type="GO" id="GO:0050265">
    <property type="term" value="F:RNA uridylyltransferase activity"/>
    <property type="evidence" value="ECO:0000314"/>
    <property type="project" value="UniProtKB"/>
</dbReference>
<dbReference type="GO" id="GO:0008270">
    <property type="term" value="F:zinc ion binding"/>
    <property type="evidence" value="ECO:0007669"/>
    <property type="project" value="UniProtKB-KW"/>
</dbReference>
<dbReference type="GO" id="GO:0010587">
    <property type="term" value="P:miRNA catabolic process"/>
    <property type="evidence" value="ECO:0000315"/>
    <property type="project" value="UniProtKB"/>
</dbReference>
<dbReference type="GO" id="GO:0010586">
    <property type="term" value="P:miRNA metabolic process"/>
    <property type="evidence" value="ECO:0000314"/>
    <property type="project" value="UniProtKB"/>
</dbReference>
<dbReference type="GO" id="GO:0001556">
    <property type="term" value="P:oocyte maturation"/>
    <property type="evidence" value="ECO:0000250"/>
    <property type="project" value="UniProtKB"/>
</dbReference>
<dbReference type="GO" id="GO:1990074">
    <property type="term" value="P:polyuridylation-dependent mRNA catabolic process"/>
    <property type="evidence" value="ECO:0000250"/>
    <property type="project" value="UniProtKB"/>
</dbReference>
<dbReference type="GO" id="GO:0031054">
    <property type="term" value="P:pre-miRNA processing"/>
    <property type="evidence" value="ECO:0000314"/>
    <property type="project" value="UniProtKB"/>
</dbReference>
<dbReference type="GO" id="GO:0031123">
    <property type="term" value="P:RNA 3'-end processing"/>
    <property type="evidence" value="ECO:0000314"/>
    <property type="project" value="UniProtKB"/>
</dbReference>
<dbReference type="GO" id="GO:0019827">
    <property type="term" value="P:stem cell population maintenance"/>
    <property type="evidence" value="ECO:0000315"/>
    <property type="project" value="UniProtKB"/>
</dbReference>
<dbReference type="GO" id="GO:0141008">
    <property type="term" value="P:transposable element silencing by mRNA destabilization"/>
    <property type="evidence" value="ECO:0000314"/>
    <property type="project" value="UniProtKB"/>
</dbReference>
<dbReference type="CDD" id="cd05402">
    <property type="entry name" value="NT_PAP_TUTase"/>
    <property type="match status" value="2"/>
</dbReference>
<dbReference type="FunFam" id="1.10.1410.10:FF:000002">
    <property type="entry name" value="terminal uridylyltransferase 4 isoform X1"/>
    <property type="match status" value="1"/>
</dbReference>
<dbReference type="FunFam" id="3.30.460.10:FF:000005">
    <property type="entry name" value="terminal uridylyltransferase 4 isoform X1"/>
    <property type="match status" value="1"/>
</dbReference>
<dbReference type="FunFam" id="3.30.460.10:FF:000013">
    <property type="entry name" value="terminal uridylyltransferase 4 isoform X1"/>
    <property type="match status" value="1"/>
</dbReference>
<dbReference type="FunFam" id="1.10.1410.10:FF:000004">
    <property type="entry name" value="terminal uridylyltransferase 4 isoform X2"/>
    <property type="match status" value="1"/>
</dbReference>
<dbReference type="Gene3D" id="1.10.1410.10">
    <property type="match status" value="2"/>
</dbReference>
<dbReference type="Gene3D" id="3.30.460.10">
    <property type="entry name" value="Beta Polymerase, domain 2"/>
    <property type="match status" value="2"/>
</dbReference>
<dbReference type="Gene3D" id="4.10.60.10">
    <property type="entry name" value="Zinc finger, CCHC-type"/>
    <property type="match status" value="1"/>
</dbReference>
<dbReference type="InterPro" id="IPR054708">
    <property type="entry name" value="MTPAP-like_central"/>
</dbReference>
<dbReference type="InterPro" id="IPR043519">
    <property type="entry name" value="NT_sf"/>
</dbReference>
<dbReference type="InterPro" id="IPR002058">
    <property type="entry name" value="PAP_assoc"/>
</dbReference>
<dbReference type="InterPro" id="IPR045100">
    <property type="entry name" value="TUT4/7_NTP_transf"/>
</dbReference>
<dbReference type="InterPro" id="IPR001878">
    <property type="entry name" value="Znf_CCHC"/>
</dbReference>
<dbReference type="InterPro" id="IPR036875">
    <property type="entry name" value="Znf_CCHC_sf"/>
</dbReference>
<dbReference type="PANTHER" id="PTHR12271">
    <property type="entry name" value="POLY A POLYMERASE CID PAP -RELATED"/>
    <property type="match status" value="1"/>
</dbReference>
<dbReference type="PANTHER" id="PTHR12271:SF49">
    <property type="entry name" value="TERMINAL URIDYLYLTRANSFERASE 4"/>
    <property type="match status" value="1"/>
</dbReference>
<dbReference type="Pfam" id="PF22600">
    <property type="entry name" value="MTPAP-like_central"/>
    <property type="match status" value="1"/>
</dbReference>
<dbReference type="Pfam" id="PF03828">
    <property type="entry name" value="PAP_assoc"/>
    <property type="match status" value="2"/>
</dbReference>
<dbReference type="Pfam" id="PF19088">
    <property type="entry name" value="TUTase"/>
    <property type="match status" value="1"/>
</dbReference>
<dbReference type="Pfam" id="PF00098">
    <property type="entry name" value="zf-CCHC"/>
    <property type="match status" value="2"/>
</dbReference>
<dbReference type="SMART" id="SM00343">
    <property type="entry name" value="ZnF_C2HC"/>
    <property type="match status" value="3"/>
</dbReference>
<dbReference type="SUPFAM" id="SSF81301">
    <property type="entry name" value="Nucleotidyltransferase"/>
    <property type="match status" value="2"/>
</dbReference>
<dbReference type="SUPFAM" id="SSF81631">
    <property type="entry name" value="PAP/OAS1 substrate-binding domain"/>
    <property type="match status" value="2"/>
</dbReference>
<dbReference type="SUPFAM" id="SSF57756">
    <property type="entry name" value="Retrovirus zinc finger-like domains"/>
    <property type="match status" value="2"/>
</dbReference>
<dbReference type="PROSITE" id="PS50158">
    <property type="entry name" value="ZF_CCHC"/>
    <property type="match status" value="3"/>
</dbReference>
<dbReference type="PROSITE" id="PS00028">
    <property type="entry name" value="ZINC_FINGER_C2H2_1"/>
    <property type="match status" value="1"/>
</dbReference>
<gene>
    <name evidence="15" type="primary">TUT4</name>
    <name type="synonym">KIAA0191</name>
    <name evidence="15" type="synonym">ZCCHC11</name>
</gene>
<reference key="1">
    <citation type="journal article" date="2006" name="Nature">
        <title>The DNA sequence and biological annotation of human chromosome 1.</title>
        <authorList>
            <person name="Gregory S.G."/>
            <person name="Barlow K.F."/>
            <person name="McLay K.E."/>
            <person name="Kaul R."/>
            <person name="Swarbreck D."/>
            <person name="Dunham A."/>
            <person name="Scott C.E."/>
            <person name="Howe K.L."/>
            <person name="Woodfine K."/>
            <person name="Spencer C.C.A."/>
            <person name="Jones M.C."/>
            <person name="Gillson C."/>
            <person name="Searle S."/>
            <person name="Zhou Y."/>
            <person name="Kokocinski F."/>
            <person name="McDonald L."/>
            <person name="Evans R."/>
            <person name="Phillips K."/>
            <person name="Atkinson A."/>
            <person name="Cooper R."/>
            <person name="Jones C."/>
            <person name="Hall R.E."/>
            <person name="Andrews T.D."/>
            <person name="Lloyd C."/>
            <person name="Ainscough R."/>
            <person name="Almeida J.P."/>
            <person name="Ambrose K.D."/>
            <person name="Anderson F."/>
            <person name="Andrew R.W."/>
            <person name="Ashwell R.I.S."/>
            <person name="Aubin K."/>
            <person name="Babbage A.K."/>
            <person name="Bagguley C.L."/>
            <person name="Bailey J."/>
            <person name="Beasley H."/>
            <person name="Bethel G."/>
            <person name="Bird C.P."/>
            <person name="Bray-Allen S."/>
            <person name="Brown J.Y."/>
            <person name="Brown A.J."/>
            <person name="Buckley D."/>
            <person name="Burton J."/>
            <person name="Bye J."/>
            <person name="Carder C."/>
            <person name="Chapman J.C."/>
            <person name="Clark S.Y."/>
            <person name="Clarke G."/>
            <person name="Clee C."/>
            <person name="Cobley V."/>
            <person name="Collier R.E."/>
            <person name="Corby N."/>
            <person name="Coville G.J."/>
            <person name="Davies J."/>
            <person name="Deadman R."/>
            <person name="Dunn M."/>
            <person name="Earthrowl M."/>
            <person name="Ellington A.G."/>
            <person name="Errington H."/>
            <person name="Frankish A."/>
            <person name="Frankland J."/>
            <person name="French L."/>
            <person name="Garner P."/>
            <person name="Garnett J."/>
            <person name="Gay L."/>
            <person name="Ghori M.R.J."/>
            <person name="Gibson R."/>
            <person name="Gilby L.M."/>
            <person name="Gillett W."/>
            <person name="Glithero R.J."/>
            <person name="Grafham D.V."/>
            <person name="Griffiths C."/>
            <person name="Griffiths-Jones S."/>
            <person name="Grocock R."/>
            <person name="Hammond S."/>
            <person name="Harrison E.S.I."/>
            <person name="Hart E."/>
            <person name="Haugen E."/>
            <person name="Heath P.D."/>
            <person name="Holmes S."/>
            <person name="Holt K."/>
            <person name="Howden P.J."/>
            <person name="Hunt A.R."/>
            <person name="Hunt S.E."/>
            <person name="Hunter G."/>
            <person name="Isherwood J."/>
            <person name="James R."/>
            <person name="Johnson C."/>
            <person name="Johnson D."/>
            <person name="Joy A."/>
            <person name="Kay M."/>
            <person name="Kershaw J.K."/>
            <person name="Kibukawa M."/>
            <person name="Kimberley A.M."/>
            <person name="King A."/>
            <person name="Knights A.J."/>
            <person name="Lad H."/>
            <person name="Laird G."/>
            <person name="Lawlor S."/>
            <person name="Leongamornlert D.A."/>
            <person name="Lloyd D.M."/>
            <person name="Loveland J."/>
            <person name="Lovell J."/>
            <person name="Lush M.J."/>
            <person name="Lyne R."/>
            <person name="Martin S."/>
            <person name="Mashreghi-Mohammadi M."/>
            <person name="Matthews L."/>
            <person name="Matthews N.S.W."/>
            <person name="McLaren S."/>
            <person name="Milne S."/>
            <person name="Mistry S."/>
            <person name="Moore M.J.F."/>
            <person name="Nickerson T."/>
            <person name="O'Dell C.N."/>
            <person name="Oliver K."/>
            <person name="Palmeiri A."/>
            <person name="Palmer S.A."/>
            <person name="Parker A."/>
            <person name="Patel D."/>
            <person name="Pearce A.V."/>
            <person name="Peck A.I."/>
            <person name="Pelan S."/>
            <person name="Phelps K."/>
            <person name="Phillimore B.J."/>
            <person name="Plumb R."/>
            <person name="Rajan J."/>
            <person name="Raymond C."/>
            <person name="Rouse G."/>
            <person name="Saenphimmachak C."/>
            <person name="Sehra H.K."/>
            <person name="Sheridan E."/>
            <person name="Shownkeen R."/>
            <person name="Sims S."/>
            <person name="Skuce C.D."/>
            <person name="Smith M."/>
            <person name="Steward C."/>
            <person name="Subramanian S."/>
            <person name="Sycamore N."/>
            <person name="Tracey A."/>
            <person name="Tromans A."/>
            <person name="Van Helmond Z."/>
            <person name="Wall M."/>
            <person name="Wallis J.M."/>
            <person name="White S."/>
            <person name="Whitehead S.L."/>
            <person name="Wilkinson J.E."/>
            <person name="Willey D.L."/>
            <person name="Williams H."/>
            <person name="Wilming L."/>
            <person name="Wray P.W."/>
            <person name="Wu Z."/>
            <person name="Coulson A."/>
            <person name="Vaudin M."/>
            <person name="Sulston J.E."/>
            <person name="Durbin R.M."/>
            <person name="Hubbard T."/>
            <person name="Wooster R."/>
            <person name="Dunham I."/>
            <person name="Carter N.P."/>
            <person name="McVean G."/>
            <person name="Ross M.T."/>
            <person name="Harrow J."/>
            <person name="Olson M.V."/>
            <person name="Beck S."/>
            <person name="Rogers J."/>
            <person name="Bentley D.R."/>
        </authorList>
    </citation>
    <scope>NUCLEOTIDE SEQUENCE [LARGE SCALE GENOMIC DNA]</scope>
</reference>
<reference key="2">
    <citation type="submission" date="2005-09" db="EMBL/GenBank/DDBJ databases">
        <authorList>
            <person name="Mural R.J."/>
            <person name="Istrail S."/>
            <person name="Sutton G.G."/>
            <person name="Florea L."/>
            <person name="Halpern A.L."/>
            <person name="Mobarry C.M."/>
            <person name="Lippert R."/>
            <person name="Walenz B."/>
            <person name="Shatkay H."/>
            <person name="Dew I."/>
            <person name="Miller J.R."/>
            <person name="Flanigan M.J."/>
            <person name="Edwards N.J."/>
            <person name="Bolanos R."/>
            <person name="Fasulo D."/>
            <person name="Halldorsson B.V."/>
            <person name="Hannenhalli S."/>
            <person name="Turner R."/>
            <person name="Yooseph S."/>
            <person name="Lu F."/>
            <person name="Nusskern D.R."/>
            <person name="Shue B.C."/>
            <person name="Zheng X.H."/>
            <person name="Zhong F."/>
            <person name="Delcher A.L."/>
            <person name="Huson D.H."/>
            <person name="Kravitz S.A."/>
            <person name="Mouchard L."/>
            <person name="Reinert K."/>
            <person name="Remington K.A."/>
            <person name="Clark A.G."/>
            <person name="Waterman M.S."/>
            <person name="Eichler E.E."/>
            <person name="Adams M.D."/>
            <person name="Hunkapiller M.W."/>
            <person name="Myers E.W."/>
            <person name="Venter J.C."/>
        </authorList>
    </citation>
    <scope>NUCLEOTIDE SEQUENCE [LARGE SCALE GENOMIC DNA]</scope>
</reference>
<reference key="3">
    <citation type="journal article" date="2004" name="Genome Res.">
        <title>The status, quality, and expansion of the NIH full-length cDNA project: the Mammalian Gene Collection (MGC).</title>
        <authorList>
            <consortium name="The MGC Project Team"/>
        </authorList>
    </citation>
    <scope>NUCLEOTIDE SEQUENCE [LARGE SCALE MRNA] (ISOFORM 3)</scope>
</reference>
<reference key="4">
    <citation type="journal article" date="2004" name="Nat. Genet.">
        <title>Complete sequencing and characterization of 21,243 full-length human cDNAs.</title>
        <authorList>
            <person name="Ota T."/>
            <person name="Suzuki Y."/>
            <person name="Nishikawa T."/>
            <person name="Otsuki T."/>
            <person name="Sugiyama T."/>
            <person name="Irie R."/>
            <person name="Wakamatsu A."/>
            <person name="Hayashi K."/>
            <person name="Sato H."/>
            <person name="Nagai K."/>
            <person name="Kimura K."/>
            <person name="Makita H."/>
            <person name="Sekine M."/>
            <person name="Obayashi M."/>
            <person name="Nishi T."/>
            <person name="Shibahara T."/>
            <person name="Tanaka T."/>
            <person name="Ishii S."/>
            <person name="Yamamoto J."/>
            <person name="Saito K."/>
            <person name="Kawai Y."/>
            <person name="Isono Y."/>
            <person name="Nakamura Y."/>
            <person name="Nagahari K."/>
            <person name="Murakami K."/>
            <person name="Yasuda T."/>
            <person name="Iwayanagi T."/>
            <person name="Wagatsuma M."/>
            <person name="Shiratori A."/>
            <person name="Sudo H."/>
            <person name="Hosoiri T."/>
            <person name="Kaku Y."/>
            <person name="Kodaira H."/>
            <person name="Kondo H."/>
            <person name="Sugawara M."/>
            <person name="Takahashi M."/>
            <person name="Kanda K."/>
            <person name="Yokoi T."/>
            <person name="Furuya T."/>
            <person name="Kikkawa E."/>
            <person name="Omura Y."/>
            <person name="Abe K."/>
            <person name="Kamihara K."/>
            <person name="Katsuta N."/>
            <person name="Sato K."/>
            <person name="Tanikawa M."/>
            <person name="Yamazaki M."/>
            <person name="Ninomiya K."/>
            <person name="Ishibashi T."/>
            <person name="Yamashita H."/>
            <person name="Murakawa K."/>
            <person name="Fujimori K."/>
            <person name="Tanai H."/>
            <person name="Kimata M."/>
            <person name="Watanabe M."/>
            <person name="Hiraoka S."/>
            <person name="Chiba Y."/>
            <person name="Ishida S."/>
            <person name="Ono Y."/>
            <person name="Takiguchi S."/>
            <person name="Watanabe S."/>
            <person name="Yosida M."/>
            <person name="Hotuta T."/>
            <person name="Kusano J."/>
            <person name="Kanehori K."/>
            <person name="Takahashi-Fujii A."/>
            <person name="Hara H."/>
            <person name="Tanase T.-O."/>
            <person name="Nomura Y."/>
            <person name="Togiya S."/>
            <person name="Komai F."/>
            <person name="Hara R."/>
            <person name="Takeuchi K."/>
            <person name="Arita M."/>
            <person name="Imose N."/>
            <person name="Musashino K."/>
            <person name="Yuuki H."/>
            <person name="Oshima A."/>
            <person name="Sasaki N."/>
            <person name="Aotsuka S."/>
            <person name="Yoshikawa Y."/>
            <person name="Matsunawa H."/>
            <person name="Ichihara T."/>
            <person name="Shiohata N."/>
            <person name="Sano S."/>
            <person name="Moriya S."/>
            <person name="Momiyama H."/>
            <person name="Satoh N."/>
            <person name="Takami S."/>
            <person name="Terashima Y."/>
            <person name="Suzuki O."/>
            <person name="Nakagawa S."/>
            <person name="Senoh A."/>
            <person name="Mizoguchi H."/>
            <person name="Goto Y."/>
            <person name="Shimizu F."/>
            <person name="Wakebe H."/>
            <person name="Hishigaki H."/>
            <person name="Watanabe T."/>
            <person name="Sugiyama A."/>
            <person name="Takemoto M."/>
            <person name="Kawakami B."/>
            <person name="Yamazaki M."/>
            <person name="Watanabe K."/>
            <person name="Kumagai A."/>
            <person name="Itakura S."/>
            <person name="Fukuzumi Y."/>
            <person name="Fujimori Y."/>
            <person name="Komiyama M."/>
            <person name="Tashiro H."/>
            <person name="Tanigami A."/>
            <person name="Fujiwara T."/>
            <person name="Ono T."/>
            <person name="Yamada K."/>
            <person name="Fujii Y."/>
            <person name="Ozaki K."/>
            <person name="Hirao M."/>
            <person name="Ohmori Y."/>
            <person name="Kawabata A."/>
            <person name="Hikiji T."/>
            <person name="Kobatake N."/>
            <person name="Inagaki H."/>
            <person name="Ikema Y."/>
            <person name="Okamoto S."/>
            <person name="Okitani R."/>
            <person name="Kawakami T."/>
            <person name="Noguchi S."/>
            <person name="Itoh T."/>
            <person name="Shigeta K."/>
            <person name="Senba T."/>
            <person name="Matsumura K."/>
            <person name="Nakajima Y."/>
            <person name="Mizuno T."/>
            <person name="Morinaga M."/>
            <person name="Sasaki M."/>
            <person name="Togashi T."/>
            <person name="Oyama M."/>
            <person name="Hata H."/>
            <person name="Watanabe M."/>
            <person name="Komatsu T."/>
            <person name="Mizushima-Sugano J."/>
            <person name="Satoh T."/>
            <person name="Shirai Y."/>
            <person name="Takahashi Y."/>
            <person name="Nakagawa K."/>
            <person name="Okumura K."/>
            <person name="Nagase T."/>
            <person name="Nomura N."/>
            <person name="Kikuchi H."/>
            <person name="Masuho Y."/>
            <person name="Yamashita R."/>
            <person name="Nakai K."/>
            <person name="Yada T."/>
            <person name="Nakamura Y."/>
            <person name="Ohara O."/>
            <person name="Isogai T."/>
            <person name="Sugano S."/>
        </authorList>
    </citation>
    <scope>NUCLEOTIDE SEQUENCE [LARGE SCALE MRNA] OF 1-684</scope>
    <source>
        <tissue>Thymus</tissue>
    </source>
</reference>
<reference key="5">
    <citation type="journal article" date="1996" name="DNA Res.">
        <title>Prediction of the coding sequences of unidentified human genes. V. The coding sequences of 40 new genes (KIAA0161-KIAA0200) deduced by analysis of cDNA clones from human cell line KG-1.</title>
        <authorList>
            <person name="Nagase T."/>
            <person name="Seki N."/>
            <person name="Ishikawa K."/>
            <person name="Tanaka A."/>
            <person name="Nomura N."/>
        </authorList>
    </citation>
    <scope>NUCLEOTIDE SEQUENCE [LARGE SCALE MRNA] OF 129-1644</scope>
    <source>
        <tissue>Bone marrow</tissue>
    </source>
</reference>
<reference key="6">
    <citation type="journal article" date="2006" name="Biochem. Biophys. Res. Commun.">
        <title>A novel Zinc finger protein, ZCCHC11, interacts with TIFA and modulates TLR signaling.</title>
        <authorList>
            <person name="Minoda Y."/>
            <person name="Saeki K."/>
            <person name="Aki D."/>
            <person name="Takaki H."/>
            <person name="Sanada T."/>
            <person name="Koga K."/>
            <person name="Kobayashi T."/>
            <person name="Takaesu G."/>
            <person name="Yoshimura A."/>
        </authorList>
    </citation>
    <scope>FUNCTION</scope>
    <scope>INTERACTION WITH T2BP</scope>
    <scope>SUBCELLULAR LOCATION</scope>
</reference>
<reference key="7">
    <citation type="journal article" date="2007" name="Science">
        <title>ATM and ATR substrate analysis reveals extensive protein networks responsive to DNA damage.</title>
        <authorList>
            <person name="Matsuoka S."/>
            <person name="Ballif B.A."/>
            <person name="Smogorzewska A."/>
            <person name="McDonald E.R. III"/>
            <person name="Hurov K.E."/>
            <person name="Luo J."/>
            <person name="Bakalarski C.E."/>
            <person name="Zhao Z."/>
            <person name="Solimini N."/>
            <person name="Lerenthal Y."/>
            <person name="Shiloh Y."/>
            <person name="Gygi S.P."/>
            <person name="Elledge S.J."/>
        </authorList>
    </citation>
    <scope>IDENTIFICATION BY MASS SPECTROMETRY [LARGE SCALE ANALYSIS]</scope>
    <source>
        <tissue>Embryonic kidney</tissue>
    </source>
</reference>
<reference key="8">
    <citation type="journal article" date="2008" name="Genes Dev.">
        <title>Degradation of histone mRNA requires oligouridylation followed by decapping and simultaneous degradation of the mRNA both 5' to 3' and 3' to 5'.</title>
        <authorList>
            <person name="Mullen T.E."/>
            <person name="Marzluff W.F."/>
        </authorList>
    </citation>
    <scope>ABSENCE OF FUNCTION IN HISTONE MRNA DEGRADATION ACTIVITY</scope>
</reference>
<reference key="9">
    <citation type="journal article" date="2009" name="Cell">
        <title>TUT4 in concert with Lin28 suppresses MicroRNA biogenesis through pre-microRNA uridylation.</title>
        <authorList>
            <person name="Heo I."/>
            <person name="Joo C."/>
            <person name="Kim Y.-K."/>
            <person name="Ha M."/>
            <person name="Yoon M.-J."/>
            <person name="Cho J."/>
            <person name="Yeom K.-H."/>
            <person name="Han J."/>
            <person name="Kim V.N."/>
        </authorList>
    </citation>
    <scope>FUNCTION</scope>
    <scope>CATALYTIC ACTIVITY</scope>
    <scope>SUBCELLULAR LOCATION</scope>
    <scope>INTERACTION WITH LIN28A</scope>
    <scope>MUTAGENESIS OF ASP-1011</scope>
</reference>
<reference key="10">
    <citation type="journal article" date="2011" name="BMC Syst. Biol.">
        <title>Initial characterization of the human central proteome.</title>
        <authorList>
            <person name="Burkard T.R."/>
            <person name="Planyavsky M."/>
            <person name="Kaupe I."/>
            <person name="Breitwieser F.P."/>
            <person name="Buerckstuemmer T."/>
            <person name="Bennett K.L."/>
            <person name="Superti-Furga G."/>
            <person name="Colinge J."/>
        </authorList>
    </citation>
    <scope>IDENTIFICATION BY MASS SPECTROMETRY [LARGE SCALE ANALYSIS]</scope>
</reference>
<reference key="11">
    <citation type="journal article" date="2011" name="Cell">
        <title>Lin28A and Lin28B inhibit let-7 microRNA biogenesis by distinct mechanisms.</title>
        <authorList>
            <person name="Piskounova E."/>
            <person name="Polytarchou C."/>
            <person name="Thornton J.E."/>
            <person name="LaPierre R.J."/>
            <person name="Pothoulakis C."/>
            <person name="Hagan J.P."/>
            <person name="Iliopoulos D."/>
            <person name="Gregory R.I."/>
        </authorList>
    </citation>
    <scope>INTERACTION WITH LIN28A</scope>
</reference>
<reference key="12">
    <citation type="journal article" date="2013" name="J. Proteome Res.">
        <title>Toward a comprehensive characterization of a human cancer cell phosphoproteome.</title>
        <authorList>
            <person name="Zhou H."/>
            <person name="Di Palma S."/>
            <person name="Preisinger C."/>
            <person name="Peng M."/>
            <person name="Polat A.N."/>
            <person name="Heck A.J."/>
            <person name="Mohammed S."/>
        </authorList>
    </citation>
    <scope>PHOSPHORYLATION [LARGE SCALE ANALYSIS] AT SER-104 AND SER-156</scope>
    <scope>IDENTIFICATION BY MASS SPECTROMETRY [LARGE SCALE ANALYSIS]</scope>
    <source>
        <tissue>Cervix carcinoma</tissue>
        <tissue>Erythroleukemia</tissue>
    </source>
</reference>
<reference key="13">
    <citation type="journal article" date="2014" name="Cell">
        <title>Uridylation by TUT4 and TUT7 marks mRNA for degradation.</title>
        <authorList>
            <person name="Lim J."/>
            <person name="Ha M."/>
            <person name="Chang H."/>
            <person name="Kwon S.C."/>
            <person name="Simanshu D.K."/>
            <person name="Patel D.J."/>
            <person name="Kim V.N."/>
        </authorList>
    </citation>
    <scope>FUNCTION</scope>
    <scope>SUBCELLULAR LOCATION</scope>
    <scope>MUTAGENESIS OF ASP-1011</scope>
</reference>
<reference key="14">
    <citation type="journal article" date="2015" name="EMBO J.">
        <title>TUT7 controls the fate of precursor microRNAs by using three different uridylation mechanisms.</title>
        <authorList>
            <person name="Kim B."/>
            <person name="Ha M."/>
            <person name="Loeff L."/>
            <person name="Chang H."/>
            <person name="Simanshu D.K."/>
            <person name="Li S."/>
            <person name="Fareh M."/>
            <person name="Patel D.J."/>
            <person name="Joo C."/>
            <person name="Kim V.N."/>
        </authorList>
    </citation>
    <scope>FUNCTION</scope>
</reference>
<reference key="15">
    <citation type="journal article" date="2018" name="Cell">
        <title>Uridylation by TUT4/7 Restricts Retrotransposition of Human LINE-1s.</title>
        <authorList>
            <person name="Warkocki Z."/>
            <person name="Krawczyk P.S."/>
            <person name="Adamska D."/>
            <person name="Bijata K."/>
            <person name="Garcia-Perez J.L."/>
            <person name="Dziembowski A."/>
        </authorList>
    </citation>
    <scope>FUNCTION</scope>
    <scope>SUBCELLULAR LOCATION</scope>
    <scope>INTERACTION WITH MOV10</scope>
    <scope>MUTAGENESIS OF ASP-1011</scope>
</reference>
<reference key="16">
    <citation type="journal article" date="2019" name="Nat. Commun.">
        <title>Crystal structure of the Lin28-interacting module of human terminal uridylyltransferase that regulates let-7 expression.</title>
        <authorList>
            <person name="Yamashita S."/>
            <person name="Nagaike T."/>
            <person name="Tomita K."/>
        </authorList>
    </citation>
    <scope>X-RAY CRYSTALLOGRAPHY (2.40 ANGSTROMS) OF 253-723 IN COMPLEX WITH ZINC IONS</scope>
    <scope>FUNCTION</scope>
    <scope>CATALYTIC ACTIVITY</scope>
    <scope>INTERACTION WITH LIN28A AND PRE-LET-7 RNA</scope>
    <scope>MUTAGENESIS OF 253-SER--LEU-333; CYS-306; CYS-309; LYS-321; LYS-324; 326-LYS-ARG-327; 329-LYS-LYS-330; HIS-450; LYS-452 AND 669-ARG-ARG-670</scope>
</reference>
<sequence length="1644" mass="185166">MEESKTLKSENHEPKKNVICEESKAVQVIGNQTLKARNDKSVKEIENSSPNRNSSKKNKQNDICIEKTEVKSCKVNAANLPGPKDLGLVLRDQSHCKAKKFPNSPVKAEKATISQAKSEKATSLQAKAEKSPKSPNSVKAEKASSYQMKSEKVPSSPAEAEKGPSLLLKDMRQKTELQQIGKKIPSSFTSVDKVNIEAVGGEKCALQNSPRSQKQQTCTDNTGDSDDSASGIEDVSDDLSKMKNDESNKENSSEMDYLENATVIDESALTPEQRLGLKQAEERLERDHIFRLEKRSPEYTNCRYLCKLCLIHIENIQGAHKHIKEKRHKKNILEKQEESELRSLPPPSPAHLAALSVAVIELAKEHGITDDDLRVRQEIVEEMSKVITTFLPECSLRLYGSSLTRFALKSSDVNIDIKFPPKMNHPDLLIKVLGILKKNVLYVDVESDFHAKVPVVVCRDRKSGLLCRVSAGNDMACLTTDLLTALGKIEPVFIPLVLAFRYWAKLCYIDSQTDGGIPSYCFALMVMFFLQQRKPPLLPCLLGSWIEGFDPKRMDDFQLKGIVEEKFVKWECNSSSATEKNSIAEENKAKADQPKDDTKKTETDNQSNAMKEKHGKSPLALETPNRVSLGQLWLELLKFYTLDFALEEYVICVRIQDILTRENKNWPKRRIAIEDPFSVKRNVARSLNSQLVYEYVVERFRAAYRYFACPQTKGGNKSTVDFKKREKGKISNKKPVKSNNMATNGCILLGETTEKINAEREQPVQCDEMDCTSQRCIIDNNNLLVNELDFADHGQDSSSLSTSKSSEIEPKLDKKQDDLAPSETCLKKELSQCNCIDLSKSPDPDKSTGTDCRSNLETESSHQSVCTDTSATSCNCKATEDASDLNDDDNLPTQELYYVFDKFILTSGKPPTIVCSICKKDGHSKNDCPEDFRKIDLKPLPPMTNRFREILDLVCKRCFDELSPPCSEQHNREQILIGLEKFIQKEYDEKARLCLFGSSKNGFGFRDSDLDICMTLEGHENAEKLNCKEIIENLAKILKRHPGLRNILPITTAKVPIVKFEHRRSGLEGDISLYNTLAQHNTRMLATYAAIDPRVQYLGYTMKVFAKRCDIGDASRGSLSSYAYILMVLYFLQQRKPPVIPVLQEIFDGKQIPQRMVDGWNAFFFDKTEELKKRLPSLGKNTESLGELWLGLLRFYTEEFDFKEYVISIRQKKLLTTFEKQWTSKCIAIEDPFDLNHNLGAGVSRKMTNFIMKAFINGRKLFGTPFYPLIGREAEYFFDSRVLTDGELAPNDRCCRVCGKIGHYMKDCPKRKSLLFRLKKKDSEEEKEGNEEEKDSRDVLDPRDLHDTRDFRDPRDLRCFICGDAGHVRRECPEVKLARQRNSSVAAAQLVRNLVNAQQVAGSAQQQGDQSIRTRQSSECSESPSYSPQPQPFPQNSSQSAAITQPSSQPGSQPKLGPPQQGAQPPHQVQMPLYNFPQSPPAQYSPMHNMGLLPMHPLQIPAPSWPIHGPVIHSAPGSAPSNIGLNDPSIIFAQPAARPVAIPNTSHDGHWPRTVAPNSLVNSGAVGNSEPGFRGLTPPIPWEHAPRPHFPLVPASWPYGLHQNFMHQGNARFQPNKPFYTQDRCATRRCRERCPHPPRGNVSE</sequence>
<proteinExistence type="evidence at protein level"/>
<protein>
    <recommendedName>
        <fullName evidence="14">Terminal uridylyltransferase 4</fullName>
        <shortName>TUTase 4</shortName>
        <ecNumber evidence="8 13">2.7.7.52</ecNumber>
    </recommendedName>
    <alternativeName>
        <fullName>Zinc finger CCHC domain-containing protein 11</fullName>
    </alternativeName>
</protein>
<evidence type="ECO:0000250" key="1"/>
<evidence type="ECO:0000250" key="2">
    <source>
        <dbReference type="UniProtKB" id="B2RX14"/>
    </source>
</evidence>
<evidence type="ECO:0000250" key="3">
    <source>
        <dbReference type="UniProtKB" id="Q5VYS8"/>
    </source>
</evidence>
<evidence type="ECO:0000255" key="4">
    <source>
        <dbReference type="PROSITE-ProRule" id="PRU00047"/>
    </source>
</evidence>
<evidence type="ECO:0000256" key="5">
    <source>
        <dbReference type="SAM" id="MobiDB-lite"/>
    </source>
</evidence>
<evidence type="ECO:0000269" key="6">
    <source>
    </source>
</evidence>
<evidence type="ECO:0000269" key="7">
    <source>
    </source>
</evidence>
<evidence type="ECO:0000269" key="8">
    <source>
    </source>
</evidence>
<evidence type="ECO:0000269" key="9">
    <source>
    </source>
</evidence>
<evidence type="ECO:0000269" key="10">
    <source>
    </source>
</evidence>
<evidence type="ECO:0000269" key="11">
    <source>
    </source>
</evidence>
<evidence type="ECO:0000269" key="12">
    <source>
    </source>
</evidence>
<evidence type="ECO:0000269" key="13">
    <source>
    </source>
</evidence>
<evidence type="ECO:0000305" key="14"/>
<evidence type="ECO:0000312" key="15">
    <source>
        <dbReference type="HGNC" id="HGNC:28981"/>
    </source>
</evidence>
<evidence type="ECO:0007744" key="16">
    <source>
    </source>
</evidence>
<evidence type="ECO:0007829" key="17">
    <source>
        <dbReference type="PDB" id="6IW6"/>
    </source>
</evidence>
<comment type="function">
    <text evidence="2 6 7 8 10 11 12 13">Uridylyltransferase that mediates the terminal uridylation of mRNAs with short (less than 25 nucleotides) poly(A) tails, hence facilitating global mRNA decay (PubMed:25480299, PubMed:31036859). Essential for both oocyte maturation and fertility. Through 3' terminal uridylation of mRNA, sculpts, with TUT7, the maternal transcriptome by eliminating transcripts during oocyte growth (By similarity). Involved in microRNA (miRNA)-induced gene silencing through uridylation of deadenylated miRNA targets. Also functions as an integral regulator of microRNA biogenesis using 3 different uridylation mechanisms (PubMed:25979828). Acts as a suppressor of miRNA biogenesis by mediating the terminal uridylation of some miRNA precursors, including that of let-7 (pre-let-7), miR107, miR-143 and miR-200c. Uridylated miRNAs are not processed by Dicer and undergo degradation. Degradation of pre-let-7 contributes to the maintenance of embryonic stem (ES) cell pluripotency (By similarity). Also catalyzes the 3' uridylation of miR-26A, a miRNA that targets IL6 transcript. This abrogates the silencing of IL6 transcript, hence promoting cytokine expression (PubMed:19703396). In the absence of LIN28A, TUT7 and TUT4 monouridylate group II pre-miRNAs, which includes most of pre-let7 members, that shapes an optimal 3' end overhang for efficient processing (PubMed:25979828). Adds oligo-U tails to truncated pre-miRNAS with a 5' overhang which may promote rapid degradation of non-functional pre-miRNA species (PubMed:25979828). May also suppress Toll-like receptor-induced NF-kappa-B activation via binding to T2BP (PubMed:16643855). Does not play a role in replication-dependent histone mRNA degradation (PubMed:18172165). Due to functional redundancy between TUT4 and TUT7, the identification of the specific role of each of these proteins is difficult (By similarity) (PubMed:16643855, PubMed:18172165, PubMed:19703396, PubMed:25480299, PubMed:25979828). TUT4 and TUT7 restrict retrotransposition of long interspersed element-1 (LINE-1) in cooperation with MOV10 counteracting the RNA chaperonne activity of L1RE1. TUT7 uridylates LINE-1 mRNAs in the cytoplasm which inhibits initiation of reverse transcription once in the nucleus, whereas uridylation by TUT4 destabilizes mRNAs in cytoplasmic ribonucleoprotein granules (PubMed:30122351).</text>
</comment>
<comment type="catalytic activity">
    <reaction evidence="8 13">
        <text>RNA(n) + UTP = RNA(n)-3'-uridine ribonucleotide + diphosphate</text>
        <dbReference type="Rhea" id="RHEA:14785"/>
        <dbReference type="Rhea" id="RHEA-COMP:14527"/>
        <dbReference type="Rhea" id="RHEA-COMP:17348"/>
        <dbReference type="ChEBI" id="CHEBI:33019"/>
        <dbReference type="ChEBI" id="CHEBI:46398"/>
        <dbReference type="ChEBI" id="CHEBI:140395"/>
        <dbReference type="ChEBI" id="CHEBI:173116"/>
        <dbReference type="EC" id="2.7.7.52"/>
    </reaction>
</comment>
<comment type="cofactor">
    <cofactor evidence="1">
        <name>Mg(2+)</name>
        <dbReference type="ChEBI" id="CHEBI:18420"/>
    </cofactor>
    <cofactor evidence="1">
        <name>Mn(2+)</name>
        <dbReference type="ChEBI" id="CHEBI:29035"/>
    </cofactor>
</comment>
<comment type="subunit">
    <text evidence="6 8 9 12 13">Interacts with LIN28A in the presence of pre-let-7 RNA (PubMed:19703396, PubMed:22118463, PubMed:31036859). Interacts with T2BP (PubMed:16643855). Interacts with MOV10; the interaction is RNA-dependent (PubMed:30122351).</text>
</comment>
<comment type="interaction">
    <interactant intactId="EBI-1606425">
        <id>Q5TAX3-1</id>
    </interactant>
    <interactant intactId="EBI-740711">
        <id>Q96CG3</id>
        <label>TIFA</label>
    </interactant>
    <organismsDiffer>false</organismsDiffer>
    <experiments>2</experiments>
</comment>
<comment type="subcellular location">
    <subcellularLocation>
        <location evidence="6">Nucleus</location>
    </subcellularLocation>
    <subcellularLocation>
        <location evidence="6 8 10">Cytoplasm</location>
    </subcellularLocation>
    <subcellularLocation>
        <location evidence="12">Cytoplasm</location>
        <location evidence="12">Cytoplasmic ribonucleoprotein granule</location>
    </subcellularLocation>
    <text evidence="12">Mainly cytoplasmic (PubMed:19703396, PubMed:25480299). Translocates into the cytoplasm following treatment of the cell with LPS (PubMed:16643855). Co-enriched in cytoplasmic foci with MOV10 (PubMed:30122351).</text>
</comment>
<comment type="alternative products">
    <event type="alternative splicing"/>
    <isoform>
        <id>Q5TAX3-1</id>
        <name>1</name>
        <sequence type="displayed"/>
    </isoform>
    <isoform>
        <id>Q5TAX3-3</id>
        <name>3</name>
        <sequence type="described" ref="VSP_062487"/>
    </isoform>
</comment>
<comment type="domain">
    <text evidence="2">Utilizes two multidomain functional modules during the switch from monouridylation to oligouridylation. The catalytic module (containing the 3 CCHC-type Zinc finger domains) is essential for both activities while the Lin28-interacting module (LIM) at the N-terminal part is indispensable for oligouridylation.</text>
</comment>
<comment type="similarity">
    <text evidence="14">Belongs to the DNA polymerase type-B-like family.</text>
</comment>
<comment type="sequence caution" evidence="14">
    <conflict type="miscellaneous discrepancy">
        <sequence resource="EMBL-CDS" id="BAH13981"/>
    </conflict>
    <text>Contaminating sequence. Sequence of unknown origin in the C-terminal part.</text>
</comment>
<accession>Q5TAX3</accession>
<accession>A0A0C4DFM7</accession>
<accession>A2RRP0</accession>
<accession>B7Z8J5</accession>
<accession>D3DQ35</accession>
<accession>Q12764</accession>
<accession>Q5TAX2</accession>
<accession>Q5TAX4</accession>
<accession>Q86XZ3</accession>
<keyword id="KW-0002">3D-structure</keyword>
<keyword id="KW-0025">Alternative splicing</keyword>
<keyword id="KW-0963">Cytoplasm</keyword>
<keyword id="KW-0460">Magnesium</keyword>
<keyword id="KW-0464">Manganese</keyword>
<keyword id="KW-0479">Metal-binding</keyword>
<keyword id="KW-0488">Methylation</keyword>
<keyword id="KW-0548">Nucleotidyltransferase</keyword>
<keyword id="KW-0539">Nucleus</keyword>
<keyword id="KW-0597">Phosphoprotein</keyword>
<keyword id="KW-1267">Proteomics identification</keyword>
<keyword id="KW-1185">Reference proteome</keyword>
<keyword id="KW-0677">Repeat</keyword>
<keyword id="KW-0943">RNA-mediated gene silencing</keyword>
<keyword id="KW-0808">Transferase</keyword>
<keyword id="KW-0862">Zinc</keyword>
<keyword id="KW-0863">Zinc-finger</keyword>